<organism>
    <name type="scientific">Limosilactobacillus reuteri subsp. reuteri (strain JCM 1112)</name>
    <name type="common">Lactobacillus reuteri</name>
    <dbReference type="NCBI Taxonomy" id="557433"/>
    <lineage>
        <taxon>Bacteria</taxon>
        <taxon>Bacillati</taxon>
        <taxon>Bacillota</taxon>
        <taxon>Bacilli</taxon>
        <taxon>Lactobacillales</taxon>
        <taxon>Lactobacillaceae</taxon>
        <taxon>Limosilactobacillus</taxon>
    </lineage>
</organism>
<protein>
    <recommendedName>
        <fullName evidence="1">Large ribosomal subunit protein uL24</fullName>
    </recommendedName>
    <alternativeName>
        <fullName evidence="2">50S ribosomal protein L24</fullName>
    </alternativeName>
</protein>
<name>RL24_LIMRJ</name>
<dbReference type="EMBL" id="AP007281">
    <property type="protein sequence ID" value="BAG25899.1"/>
    <property type="molecule type" value="Genomic_DNA"/>
</dbReference>
<dbReference type="RefSeq" id="WP_003664549.1">
    <property type="nucleotide sequence ID" value="NC_010609.1"/>
</dbReference>
<dbReference type="SMR" id="B2G8W7"/>
<dbReference type="GeneID" id="77191468"/>
<dbReference type="KEGG" id="lrf:LAR_1383"/>
<dbReference type="HOGENOM" id="CLU_093315_2_0_9"/>
<dbReference type="GO" id="GO:1990904">
    <property type="term" value="C:ribonucleoprotein complex"/>
    <property type="evidence" value="ECO:0007669"/>
    <property type="project" value="UniProtKB-KW"/>
</dbReference>
<dbReference type="GO" id="GO:0005840">
    <property type="term" value="C:ribosome"/>
    <property type="evidence" value="ECO:0007669"/>
    <property type="project" value="UniProtKB-KW"/>
</dbReference>
<dbReference type="GO" id="GO:0019843">
    <property type="term" value="F:rRNA binding"/>
    <property type="evidence" value="ECO:0007669"/>
    <property type="project" value="UniProtKB-UniRule"/>
</dbReference>
<dbReference type="GO" id="GO:0003735">
    <property type="term" value="F:structural constituent of ribosome"/>
    <property type="evidence" value="ECO:0007669"/>
    <property type="project" value="InterPro"/>
</dbReference>
<dbReference type="GO" id="GO:0006412">
    <property type="term" value="P:translation"/>
    <property type="evidence" value="ECO:0007669"/>
    <property type="project" value="UniProtKB-UniRule"/>
</dbReference>
<dbReference type="CDD" id="cd06089">
    <property type="entry name" value="KOW_RPL26"/>
    <property type="match status" value="1"/>
</dbReference>
<dbReference type="FunFam" id="2.30.30.30:FF:000004">
    <property type="entry name" value="50S ribosomal protein L24"/>
    <property type="match status" value="1"/>
</dbReference>
<dbReference type="Gene3D" id="2.30.30.30">
    <property type="match status" value="1"/>
</dbReference>
<dbReference type="HAMAP" id="MF_01326_B">
    <property type="entry name" value="Ribosomal_uL24_B"/>
    <property type="match status" value="1"/>
</dbReference>
<dbReference type="InterPro" id="IPR005824">
    <property type="entry name" value="KOW"/>
</dbReference>
<dbReference type="InterPro" id="IPR014722">
    <property type="entry name" value="Rib_uL2_dom2"/>
</dbReference>
<dbReference type="InterPro" id="IPR003256">
    <property type="entry name" value="Ribosomal_uL24"/>
</dbReference>
<dbReference type="InterPro" id="IPR005825">
    <property type="entry name" value="Ribosomal_uL24_CS"/>
</dbReference>
<dbReference type="InterPro" id="IPR041988">
    <property type="entry name" value="Ribosomal_uL24_KOW"/>
</dbReference>
<dbReference type="InterPro" id="IPR008991">
    <property type="entry name" value="Translation_prot_SH3-like_sf"/>
</dbReference>
<dbReference type="NCBIfam" id="TIGR01079">
    <property type="entry name" value="rplX_bact"/>
    <property type="match status" value="1"/>
</dbReference>
<dbReference type="PANTHER" id="PTHR12903">
    <property type="entry name" value="MITOCHONDRIAL RIBOSOMAL PROTEIN L24"/>
    <property type="match status" value="1"/>
</dbReference>
<dbReference type="Pfam" id="PF00467">
    <property type="entry name" value="KOW"/>
    <property type="match status" value="1"/>
</dbReference>
<dbReference type="Pfam" id="PF17136">
    <property type="entry name" value="ribosomal_L24"/>
    <property type="match status" value="1"/>
</dbReference>
<dbReference type="SMART" id="SM00739">
    <property type="entry name" value="KOW"/>
    <property type="match status" value="1"/>
</dbReference>
<dbReference type="SUPFAM" id="SSF50104">
    <property type="entry name" value="Translation proteins SH3-like domain"/>
    <property type="match status" value="1"/>
</dbReference>
<dbReference type="PROSITE" id="PS01108">
    <property type="entry name" value="RIBOSOMAL_L24"/>
    <property type="match status" value="1"/>
</dbReference>
<evidence type="ECO:0000255" key="1">
    <source>
        <dbReference type="HAMAP-Rule" id="MF_01326"/>
    </source>
</evidence>
<evidence type="ECO:0000305" key="2"/>
<feature type="chain" id="PRO_1000142009" description="Large ribosomal subunit protein uL24">
    <location>
        <begin position="1"/>
        <end position="102"/>
    </location>
</feature>
<comment type="function">
    <text evidence="1">One of two assembly initiator proteins, it binds directly to the 5'-end of the 23S rRNA, where it nucleates assembly of the 50S subunit.</text>
</comment>
<comment type="function">
    <text evidence="1">One of the proteins that surrounds the polypeptide exit tunnel on the outside of the subunit.</text>
</comment>
<comment type="subunit">
    <text evidence="1">Part of the 50S ribosomal subunit.</text>
</comment>
<comment type="similarity">
    <text evidence="1">Belongs to the universal ribosomal protein uL24 family.</text>
</comment>
<proteinExistence type="inferred from homology"/>
<keyword id="KW-0687">Ribonucleoprotein</keyword>
<keyword id="KW-0689">Ribosomal protein</keyword>
<keyword id="KW-0694">RNA-binding</keyword>
<keyword id="KW-0699">rRNA-binding</keyword>
<reference key="1">
    <citation type="journal article" date="2008" name="DNA Res.">
        <title>Comparative genome analysis of Lactobacillus reuteri and Lactobacillus fermentum reveal a genomic island for reuterin and cobalamin production.</title>
        <authorList>
            <person name="Morita H."/>
            <person name="Toh H."/>
            <person name="Fukuda S."/>
            <person name="Horikawa H."/>
            <person name="Oshima K."/>
            <person name="Suzuki T."/>
            <person name="Murakami M."/>
            <person name="Hisamatsu S."/>
            <person name="Kato Y."/>
            <person name="Takizawa T."/>
            <person name="Fukuoka H."/>
            <person name="Yoshimura T."/>
            <person name="Itoh K."/>
            <person name="O'Sullivan D.J."/>
            <person name="McKay L.L."/>
            <person name="Ohno H."/>
            <person name="Kikuchi J."/>
            <person name="Masaoka T."/>
            <person name="Hattori M."/>
        </authorList>
    </citation>
    <scope>NUCLEOTIDE SEQUENCE [LARGE SCALE GENOMIC DNA]</scope>
    <source>
        <strain>JCM 1112</strain>
    </source>
</reference>
<gene>
    <name evidence="1" type="primary">rplX</name>
    <name type="ordered locus">LAR_1383</name>
</gene>
<sequence>MFIKTGDKVRVIAGKDKGKEGTIKKVLASQNRVIVEGVNIVKKHQKPSNSNPNGGVIDTEAAINASNVMLIDPSTNEPTRVGYKFVDGKKVRVAKKSGKTLD</sequence>
<accession>B2G8W7</accession>